<keyword id="KW-1015">Disulfide bond</keyword>
<keyword id="KW-0255">Endonuclease</keyword>
<keyword id="KW-0378">Hydrolase</keyword>
<keyword id="KW-0456">Lyase</keyword>
<keyword id="KW-0540">Nuclease</keyword>
<keyword id="KW-1185">Reference proteome</keyword>
<keyword id="KW-0964">Secreted</keyword>
<keyword id="KW-0732">Signal</keyword>
<evidence type="ECO:0000250" key="1"/>
<evidence type="ECO:0000305" key="2"/>
<sequence>MGLEKSLFLFSLLVLVLGWVQPSLGVESRETPAQKFERQHMDEEGPFPSSPTYCNEMMKSRGMTSGWCKSMNTFVHEPLATVQAICSQGQVTCKNGRNNCHKSSSTLRITDCRLKGSSKYPNCDYTTTNSQKHIIIACEGNPLVPVHFDDSV</sequence>
<dbReference type="EC" id="4.6.1.18"/>
<dbReference type="EMBL" id="AJ315460">
    <property type="protein sequence ID" value="CAC86441.1"/>
    <property type="molecule type" value="Genomic_DNA"/>
</dbReference>
<dbReference type="RefSeq" id="NP_001020287.1">
    <property type="nucleotide sequence ID" value="NM_001025116.2"/>
</dbReference>
<dbReference type="RefSeq" id="XP_006251937.1">
    <property type="nucleotide sequence ID" value="XM_006251875.1"/>
</dbReference>
<dbReference type="RefSeq" id="XP_008772017.1">
    <property type="nucleotide sequence ID" value="XM_008773795.1"/>
</dbReference>
<dbReference type="RefSeq" id="XP_017457997.1">
    <property type="nucleotide sequence ID" value="XM_017602508.1"/>
</dbReference>
<dbReference type="RefSeq" id="XP_017460460.1">
    <property type="nucleotide sequence ID" value="XM_017604971.1"/>
</dbReference>
<dbReference type="SMR" id="Q8VD89"/>
<dbReference type="FunCoup" id="Q8VD89">
    <property type="interactions" value="4"/>
</dbReference>
<dbReference type="STRING" id="10116.ENSRNOP00000072263"/>
<dbReference type="iPTMnet" id="Q8VD89"/>
<dbReference type="PhosphoSitePlus" id="Q8VD89"/>
<dbReference type="PaxDb" id="10116-ENSRNOP00000049752"/>
<dbReference type="Ensembl" id="ENSRNOT00000086427.2">
    <property type="protein sequence ID" value="ENSRNOP00000068653.2"/>
    <property type="gene ID" value="ENSRNOG00000069584.1"/>
</dbReference>
<dbReference type="GeneID" id="305844"/>
<dbReference type="KEGG" id="rno:305844"/>
<dbReference type="UCSC" id="RGD:1565230">
    <property type="organism name" value="rat"/>
</dbReference>
<dbReference type="AGR" id="RGD:1565230"/>
<dbReference type="CTD" id="305844"/>
<dbReference type="RGD" id="1565230">
    <property type="gene designation" value="RGD1565230"/>
</dbReference>
<dbReference type="VEuPathDB" id="HostDB:ENSRNOG00000063584"/>
<dbReference type="eggNOG" id="ENOG502SQ4K">
    <property type="taxonomic scope" value="Eukaryota"/>
</dbReference>
<dbReference type="GeneTree" id="ENSGT00940000160869"/>
<dbReference type="HOGENOM" id="CLU_117006_0_0_1"/>
<dbReference type="InParanoid" id="Q8VD89"/>
<dbReference type="OMA" id="LMGHRYC"/>
<dbReference type="OrthoDB" id="8573660at2759"/>
<dbReference type="PhylomeDB" id="Q8VD89"/>
<dbReference type="TreeFam" id="TF333393"/>
<dbReference type="PRO" id="PR:Q8VD89"/>
<dbReference type="Proteomes" id="UP000002494">
    <property type="component" value="Chromosome 15"/>
</dbReference>
<dbReference type="Bgee" id="ENSRNOG00000054433">
    <property type="expression patterns" value="Expressed in pancreas and 6 other cell types or tissues"/>
</dbReference>
<dbReference type="GO" id="GO:0005576">
    <property type="term" value="C:extracellular region"/>
    <property type="evidence" value="ECO:0007669"/>
    <property type="project" value="UniProtKB-SubCell"/>
</dbReference>
<dbReference type="GO" id="GO:0016829">
    <property type="term" value="F:lyase activity"/>
    <property type="evidence" value="ECO:0007669"/>
    <property type="project" value="UniProtKB-KW"/>
</dbReference>
<dbReference type="GO" id="GO:0003676">
    <property type="term" value="F:nucleic acid binding"/>
    <property type="evidence" value="ECO:0007669"/>
    <property type="project" value="InterPro"/>
</dbReference>
<dbReference type="GO" id="GO:0004522">
    <property type="term" value="F:ribonuclease A activity"/>
    <property type="evidence" value="ECO:0007669"/>
    <property type="project" value="UniProtKB-EC"/>
</dbReference>
<dbReference type="GO" id="GO:0004540">
    <property type="term" value="F:RNA nuclease activity"/>
    <property type="evidence" value="ECO:0000318"/>
    <property type="project" value="GO_Central"/>
</dbReference>
<dbReference type="GO" id="GO:0050830">
    <property type="term" value="P:defense response to Gram-positive bacterium"/>
    <property type="evidence" value="ECO:0000318"/>
    <property type="project" value="GO_Central"/>
</dbReference>
<dbReference type="CDD" id="cd06265">
    <property type="entry name" value="RNase_A_canonical"/>
    <property type="match status" value="1"/>
</dbReference>
<dbReference type="FunFam" id="3.10.130.10:FF:000001">
    <property type="entry name" value="Ribonuclease pancreatic"/>
    <property type="match status" value="1"/>
</dbReference>
<dbReference type="Gene3D" id="3.10.130.10">
    <property type="entry name" value="Ribonuclease A-like domain"/>
    <property type="match status" value="1"/>
</dbReference>
<dbReference type="InterPro" id="IPR001427">
    <property type="entry name" value="RNaseA"/>
</dbReference>
<dbReference type="InterPro" id="IPR036816">
    <property type="entry name" value="RNaseA-like_dom_sf"/>
</dbReference>
<dbReference type="InterPro" id="IPR023411">
    <property type="entry name" value="RNaseA_AS"/>
</dbReference>
<dbReference type="InterPro" id="IPR023412">
    <property type="entry name" value="RNaseA_domain"/>
</dbReference>
<dbReference type="PANTHER" id="PTHR11437">
    <property type="entry name" value="RIBONUCLEASE"/>
    <property type="match status" value="1"/>
</dbReference>
<dbReference type="PANTHER" id="PTHR11437:SF24">
    <property type="entry name" value="RIBONUCLEASE PANCREATIC"/>
    <property type="match status" value="1"/>
</dbReference>
<dbReference type="Pfam" id="PF00074">
    <property type="entry name" value="RnaseA"/>
    <property type="match status" value="1"/>
</dbReference>
<dbReference type="PRINTS" id="PR00794">
    <property type="entry name" value="RIBONUCLEASE"/>
</dbReference>
<dbReference type="SMART" id="SM00092">
    <property type="entry name" value="RNAse_Pc"/>
    <property type="match status" value="1"/>
</dbReference>
<dbReference type="SUPFAM" id="SSF54076">
    <property type="entry name" value="RNase A-like"/>
    <property type="match status" value="1"/>
</dbReference>
<dbReference type="PROSITE" id="PS00127">
    <property type="entry name" value="RNASE_PANCREATIC"/>
    <property type="match status" value="1"/>
</dbReference>
<protein>
    <recommendedName>
        <fullName>Ribonuclease pancreatic gamma-type</fullName>
        <ecNumber>4.6.1.18</ecNumber>
    </recommendedName>
    <alternativeName>
        <fullName>RNase 1 gamma</fullName>
    </alternativeName>
</protein>
<organism>
    <name type="scientific">Rattus norvegicus</name>
    <name type="common">Rat</name>
    <dbReference type="NCBI Taxonomy" id="10116"/>
    <lineage>
        <taxon>Eukaryota</taxon>
        <taxon>Metazoa</taxon>
        <taxon>Chordata</taxon>
        <taxon>Craniata</taxon>
        <taxon>Vertebrata</taxon>
        <taxon>Euteleostomi</taxon>
        <taxon>Mammalia</taxon>
        <taxon>Eutheria</taxon>
        <taxon>Euarchontoglires</taxon>
        <taxon>Glires</taxon>
        <taxon>Rodentia</taxon>
        <taxon>Myomorpha</taxon>
        <taxon>Muroidea</taxon>
        <taxon>Muridae</taxon>
        <taxon>Murinae</taxon>
        <taxon>Rattus</taxon>
    </lineage>
</organism>
<accession>Q8VD89</accession>
<name>RNS1G_RAT</name>
<reference key="1">
    <citation type="journal article" date="2002" name="J. Mol. Evol.">
        <title>Pancreatic-type ribonuclease 1 gene duplications in rat species.</title>
        <authorList>
            <person name="Dubois J.-Y.F."/>
            <person name="Jekel P.A."/>
            <person name="Mulder P.P.M.F.A."/>
            <person name="Bussink A.P."/>
            <person name="Catzeflis F.M."/>
            <person name="Carsana A."/>
            <person name="Beintema J.J."/>
        </authorList>
    </citation>
    <scope>NUCLEOTIDE SEQUENCE [GENOMIC DNA]</scope>
</reference>
<feature type="signal peptide" evidence="1">
    <location>
        <begin position="1"/>
        <end position="25"/>
    </location>
</feature>
<feature type="chain" id="PRO_0000234935" description="Ribonuclease pancreatic gamma-type">
    <location>
        <begin position="26"/>
        <end position="152"/>
    </location>
</feature>
<feature type="active site" description="Proton acceptor" evidence="1">
    <location>
        <position position="40"/>
    </location>
</feature>
<feature type="active site" description="Proton donor" evidence="1">
    <location>
        <position position="147"/>
    </location>
</feature>
<feature type="binding site" evidence="1">
    <location>
        <position position="35"/>
    </location>
    <ligand>
        <name>substrate</name>
    </ligand>
</feature>
<feature type="binding site" evidence="1">
    <location>
        <position position="38"/>
    </location>
    <ligand>
        <name>substrate</name>
    </ligand>
</feature>
<feature type="binding site" evidence="1">
    <location>
        <begin position="69"/>
        <end position="73"/>
    </location>
    <ligand>
        <name>substrate</name>
    </ligand>
</feature>
<feature type="binding site" evidence="1">
    <location>
        <position position="94"/>
    </location>
    <ligand>
        <name>substrate</name>
    </ligand>
</feature>
<feature type="binding site" evidence="1">
    <location>
        <position position="113"/>
    </location>
    <ligand>
        <name>substrate</name>
    </ligand>
</feature>
<feature type="disulfide bond" evidence="1">
    <location>
        <begin position="54"/>
        <end position="112"/>
    </location>
</feature>
<feature type="disulfide bond" evidence="1">
    <location>
        <begin position="68"/>
        <end position="123"/>
    </location>
</feature>
<feature type="disulfide bond" evidence="1">
    <location>
        <begin position="86"/>
        <end position="138"/>
    </location>
</feature>
<feature type="disulfide bond" evidence="1">
    <location>
        <begin position="93"/>
        <end position="100"/>
    </location>
</feature>
<proteinExistence type="inferred from homology"/>
<comment type="function">
    <text evidence="1">Endonuclease that catalyzes the cleavage of RNA on the 3' side of pyrimidine nucleotides. Acts on single-stranded and double-stranded RNA (By similarity).</text>
</comment>
<comment type="catalytic activity">
    <reaction>
        <text>an [RNA] containing cytidine + H2O = an [RNA]-3'-cytidine-3'-phosphate + a 5'-hydroxy-ribonucleotide-3'-[RNA].</text>
        <dbReference type="EC" id="4.6.1.18"/>
    </reaction>
</comment>
<comment type="catalytic activity">
    <reaction>
        <text>an [RNA] containing uridine + H2O = an [RNA]-3'-uridine-3'-phosphate + a 5'-hydroxy-ribonucleotide-3'-[RNA].</text>
        <dbReference type="EC" id="4.6.1.18"/>
    </reaction>
</comment>
<comment type="subunit">
    <text evidence="1">Monomer.</text>
</comment>
<comment type="subcellular location">
    <subcellularLocation>
        <location evidence="1">Secreted</location>
    </subcellularLocation>
</comment>
<comment type="similarity">
    <text evidence="2">Belongs to the pancreatic ribonuclease family.</text>
</comment>